<dbReference type="EC" id="2.7.1.30" evidence="1"/>
<dbReference type="EMBL" id="CP001025">
    <property type="protein sequence ID" value="ACB65080.1"/>
    <property type="molecule type" value="Genomic_DNA"/>
</dbReference>
<dbReference type="RefSeq" id="WP_012364653.1">
    <property type="nucleotide sequence ID" value="NC_010551.1"/>
</dbReference>
<dbReference type="SMR" id="B1YWB2"/>
<dbReference type="KEGG" id="bac:BamMC406_2603"/>
<dbReference type="HOGENOM" id="CLU_009281_2_3_4"/>
<dbReference type="OrthoDB" id="9805576at2"/>
<dbReference type="UniPathway" id="UPA00618">
    <property type="reaction ID" value="UER00672"/>
</dbReference>
<dbReference type="Proteomes" id="UP000001680">
    <property type="component" value="Chromosome 1"/>
</dbReference>
<dbReference type="GO" id="GO:0005829">
    <property type="term" value="C:cytosol"/>
    <property type="evidence" value="ECO:0007669"/>
    <property type="project" value="TreeGrafter"/>
</dbReference>
<dbReference type="GO" id="GO:0005524">
    <property type="term" value="F:ATP binding"/>
    <property type="evidence" value="ECO:0007669"/>
    <property type="project" value="UniProtKB-UniRule"/>
</dbReference>
<dbReference type="GO" id="GO:0004370">
    <property type="term" value="F:glycerol kinase activity"/>
    <property type="evidence" value="ECO:0000250"/>
    <property type="project" value="UniProtKB"/>
</dbReference>
<dbReference type="GO" id="GO:0019563">
    <property type="term" value="P:glycerol catabolic process"/>
    <property type="evidence" value="ECO:0007669"/>
    <property type="project" value="UniProtKB-UniRule"/>
</dbReference>
<dbReference type="GO" id="GO:0006071">
    <property type="term" value="P:glycerol metabolic process"/>
    <property type="evidence" value="ECO:0000250"/>
    <property type="project" value="UniProtKB"/>
</dbReference>
<dbReference type="GO" id="GO:0006072">
    <property type="term" value="P:glycerol-3-phosphate metabolic process"/>
    <property type="evidence" value="ECO:0007669"/>
    <property type="project" value="InterPro"/>
</dbReference>
<dbReference type="CDD" id="cd07786">
    <property type="entry name" value="FGGY_EcGK_like"/>
    <property type="match status" value="1"/>
</dbReference>
<dbReference type="FunFam" id="3.30.420.40:FF:000007">
    <property type="entry name" value="Glycerol kinase"/>
    <property type="match status" value="1"/>
</dbReference>
<dbReference type="FunFam" id="3.30.420.40:FF:000008">
    <property type="entry name" value="Glycerol kinase"/>
    <property type="match status" value="1"/>
</dbReference>
<dbReference type="Gene3D" id="3.30.420.40">
    <property type="match status" value="2"/>
</dbReference>
<dbReference type="HAMAP" id="MF_00186">
    <property type="entry name" value="Glycerol_kin"/>
    <property type="match status" value="1"/>
</dbReference>
<dbReference type="InterPro" id="IPR043129">
    <property type="entry name" value="ATPase_NBD"/>
</dbReference>
<dbReference type="InterPro" id="IPR000577">
    <property type="entry name" value="Carb_kinase_FGGY"/>
</dbReference>
<dbReference type="InterPro" id="IPR018483">
    <property type="entry name" value="Carb_kinase_FGGY_CS"/>
</dbReference>
<dbReference type="InterPro" id="IPR018485">
    <property type="entry name" value="FGGY_C"/>
</dbReference>
<dbReference type="InterPro" id="IPR018484">
    <property type="entry name" value="FGGY_N"/>
</dbReference>
<dbReference type="InterPro" id="IPR005999">
    <property type="entry name" value="Glycerol_kin"/>
</dbReference>
<dbReference type="NCBIfam" id="TIGR01311">
    <property type="entry name" value="glycerol_kin"/>
    <property type="match status" value="1"/>
</dbReference>
<dbReference type="NCBIfam" id="NF000756">
    <property type="entry name" value="PRK00047.1"/>
    <property type="match status" value="1"/>
</dbReference>
<dbReference type="PANTHER" id="PTHR10196:SF69">
    <property type="entry name" value="GLYCEROL KINASE"/>
    <property type="match status" value="1"/>
</dbReference>
<dbReference type="PANTHER" id="PTHR10196">
    <property type="entry name" value="SUGAR KINASE"/>
    <property type="match status" value="1"/>
</dbReference>
<dbReference type="Pfam" id="PF02782">
    <property type="entry name" value="FGGY_C"/>
    <property type="match status" value="1"/>
</dbReference>
<dbReference type="Pfam" id="PF00370">
    <property type="entry name" value="FGGY_N"/>
    <property type="match status" value="1"/>
</dbReference>
<dbReference type="PIRSF" id="PIRSF000538">
    <property type="entry name" value="GlpK"/>
    <property type="match status" value="1"/>
</dbReference>
<dbReference type="SUPFAM" id="SSF53067">
    <property type="entry name" value="Actin-like ATPase domain"/>
    <property type="match status" value="2"/>
</dbReference>
<dbReference type="PROSITE" id="PS00933">
    <property type="entry name" value="FGGY_KINASES_1"/>
    <property type="match status" value="1"/>
</dbReference>
<dbReference type="PROSITE" id="PS00445">
    <property type="entry name" value="FGGY_KINASES_2"/>
    <property type="match status" value="1"/>
</dbReference>
<feature type="chain" id="PRO_1000098719" description="Glycerol kinase">
    <location>
        <begin position="1"/>
        <end position="500"/>
    </location>
</feature>
<feature type="binding site" evidence="1">
    <location>
        <position position="13"/>
    </location>
    <ligand>
        <name>ADP</name>
        <dbReference type="ChEBI" id="CHEBI:456216"/>
    </ligand>
</feature>
<feature type="binding site" evidence="1">
    <location>
        <position position="13"/>
    </location>
    <ligand>
        <name>ATP</name>
        <dbReference type="ChEBI" id="CHEBI:30616"/>
    </ligand>
</feature>
<feature type="binding site" evidence="1">
    <location>
        <position position="13"/>
    </location>
    <ligand>
        <name>sn-glycerol 3-phosphate</name>
        <dbReference type="ChEBI" id="CHEBI:57597"/>
    </ligand>
</feature>
<feature type="binding site" evidence="1">
    <location>
        <position position="14"/>
    </location>
    <ligand>
        <name>ATP</name>
        <dbReference type="ChEBI" id="CHEBI:30616"/>
    </ligand>
</feature>
<feature type="binding site" evidence="1">
    <location>
        <position position="15"/>
    </location>
    <ligand>
        <name>ATP</name>
        <dbReference type="ChEBI" id="CHEBI:30616"/>
    </ligand>
</feature>
<feature type="binding site" evidence="1">
    <location>
        <position position="17"/>
    </location>
    <ligand>
        <name>ADP</name>
        <dbReference type="ChEBI" id="CHEBI:456216"/>
    </ligand>
</feature>
<feature type="binding site" evidence="1">
    <location>
        <position position="83"/>
    </location>
    <ligand>
        <name>glycerol</name>
        <dbReference type="ChEBI" id="CHEBI:17754"/>
    </ligand>
</feature>
<feature type="binding site" evidence="1">
    <location>
        <position position="83"/>
    </location>
    <ligand>
        <name>sn-glycerol 3-phosphate</name>
        <dbReference type="ChEBI" id="CHEBI:57597"/>
    </ligand>
</feature>
<feature type="binding site" evidence="1">
    <location>
        <position position="84"/>
    </location>
    <ligand>
        <name>glycerol</name>
        <dbReference type="ChEBI" id="CHEBI:17754"/>
    </ligand>
</feature>
<feature type="binding site" evidence="1">
    <location>
        <position position="84"/>
    </location>
    <ligand>
        <name>sn-glycerol 3-phosphate</name>
        <dbReference type="ChEBI" id="CHEBI:57597"/>
    </ligand>
</feature>
<feature type="binding site" evidence="1">
    <location>
        <position position="135"/>
    </location>
    <ligand>
        <name>glycerol</name>
        <dbReference type="ChEBI" id="CHEBI:17754"/>
    </ligand>
</feature>
<feature type="binding site" evidence="1">
    <location>
        <position position="135"/>
    </location>
    <ligand>
        <name>sn-glycerol 3-phosphate</name>
        <dbReference type="ChEBI" id="CHEBI:57597"/>
    </ligand>
</feature>
<feature type="binding site" evidence="1">
    <location>
        <position position="244"/>
    </location>
    <ligand>
        <name>glycerol</name>
        <dbReference type="ChEBI" id="CHEBI:17754"/>
    </ligand>
</feature>
<feature type="binding site" evidence="1">
    <location>
        <position position="244"/>
    </location>
    <ligand>
        <name>sn-glycerol 3-phosphate</name>
        <dbReference type="ChEBI" id="CHEBI:57597"/>
    </ligand>
</feature>
<feature type="binding site" evidence="1">
    <location>
        <position position="245"/>
    </location>
    <ligand>
        <name>glycerol</name>
        <dbReference type="ChEBI" id="CHEBI:17754"/>
    </ligand>
</feature>
<feature type="binding site" evidence="1">
    <location>
        <position position="266"/>
    </location>
    <ligand>
        <name>ADP</name>
        <dbReference type="ChEBI" id="CHEBI:456216"/>
    </ligand>
</feature>
<feature type="binding site" evidence="1">
    <location>
        <position position="266"/>
    </location>
    <ligand>
        <name>ATP</name>
        <dbReference type="ChEBI" id="CHEBI:30616"/>
    </ligand>
</feature>
<feature type="binding site" evidence="1">
    <location>
        <position position="309"/>
    </location>
    <ligand>
        <name>ADP</name>
        <dbReference type="ChEBI" id="CHEBI:456216"/>
    </ligand>
</feature>
<feature type="binding site" evidence="1">
    <location>
        <position position="309"/>
    </location>
    <ligand>
        <name>ATP</name>
        <dbReference type="ChEBI" id="CHEBI:30616"/>
    </ligand>
</feature>
<feature type="binding site" evidence="1">
    <location>
        <position position="313"/>
    </location>
    <ligand>
        <name>ATP</name>
        <dbReference type="ChEBI" id="CHEBI:30616"/>
    </ligand>
</feature>
<feature type="binding site" evidence="1">
    <location>
        <position position="410"/>
    </location>
    <ligand>
        <name>ADP</name>
        <dbReference type="ChEBI" id="CHEBI:456216"/>
    </ligand>
</feature>
<feature type="binding site" evidence="1">
    <location>
        <position position="410"/>
    </location>
    <ligand>
        <name>ATP</name>
        <dbReference type="ChEBI" id="CHEBI:30616"/>
    </ligand>
</feature>
<feature type="binding site" evidence="1">
    <location>
        <position position="414"/>
    </location>
    <ligand>
        <name>ADP</name>
        <dbReference type="ChEBI" id="CHEBI:456216"/>
    </ligand>
</feature>
<gene>
    <name evidence="1" type="primary">glpK</name>
    <name type="ordered locus">BamMC406_2603</name>
</gene>
<sequence>MQDQYILALDQGTTSSRAMLFDRQGNIVSIAQKEFEQIYPQPGWVEHDPQEIWSTQAGVAAEAVTRTGLNGTSIAAIGITNQRETTIVWDRETGQPVYNAIVWQDRRTADFCDSLKKQGLEAKVRAKTGLPIDSYFSATKIRWILDNVPGARDKARQGKLAFGTVDSWLVWNFTKHELHVTDVTNASRTMLFNIHTREWDSELLELLDIPRSMLPDVKASSEIYGHTKTTVFASKIPLAGIAGDQHAALFGQMCTTSGMVKNTYGTGCFLMMNTGDKPIESKNNLVTTIAWQIGDDVQYALEGSIFIAGAVVQWLRDGVGIIKTAAEIEALAASVPHTDGVYLVPAFAGLGAPHWNARARGSVFGVTRGTTAAHLARAALDSIAYQSLDVLAAMEADSGISIGELRVDGGASANDLLMQFQADLLGVDAVRPQITETTALGAAYLAGLAIGYWKNLDEVRSQWQLDRRFSPSMPKEQVEQRMAGWQRAVRAAKAWADDTQ</sequence>
<comment type="function">
    <text evidence="1">Key enzyme in the regulation of glycerol uptake and metabolism. Catalyzes the phosphorylation of glycerol to yield sn-glycerol 3-phosphate.</text>
</comment>
<comment type="catalytic activity">
    <reaction evidence="1">
        <text>glycerol + ATP = sn-glycerol 3-phosphate + ADP + H(+)</text>
        <dbReference type="Rhea" id="RHEA:21644"/>
        <dbReference type="ChEBI" id="CHEBI:15378"/>
        <dbReference type="ChEBI" id="CHEBI:17754"/>
        <dbReference type="ChEBI" id="CHEBI:30616"/>
        <dbReference type="ChEBI" id="CHEBI:57597"/>
        <dbReference type="ChEBI" id="CHEBI:456216"/>
        <dbReference type="EC" id="2.7.1.30"/>
    </reaction>
</comment>
<comment type="activity regulation">
    <text evidence="1">Inhibited by fructose 1,6-bisphosphate (FBP).</text>
</comment>
<comment type="pathway">
    <text evidence="1">Polyol metabolism; glycerol degradation via glycerol kinase pathway; sn-glycerol 3-phosphate from glycerol: step 1/1.</text>
</comment>
<comment type="similarity">
    <text evidence="1">Belongs to the FGGY kinase family.</text>
</comment>
<keyword id="KW-0067">ATP-binding</keyword>
<keyword id="KW-0319">Glycerol metabolism</keyword>
<keyword id="KW-0418">Kinase</keyword>
<keyword id="KW-0547">Nucleotide-binding</keyword>
<keyword id="KW-0808">Transferase</keyword>
<proteinExistence type="inferred from homology"/>
<evidence type="ECO:0000255" key="1">
    <source>
        <dbReference type="HAMAP-Rule" id="MF_00186"/>
    </source>
</evidence>
<protein>
    <recommendedName>
        <fullName evidence="1">Glycerol kinase</fullName>
        <ecNumber evidence="1">2.7.1.30</ecNumber>
    </recommendedName>
    <alternativeName>
        <fullName evidence="1">ATP:glycerol 3-phosphotransferase</fullName>
    </alternativeName>
    <alternativeName>
        <fullName evidence="1">Glycerokinase</fullName>
        <shortName evidence="1">GK</shortName>
    </alternativeName>
</protein>
<name>GLPK_BURA4</name>
<reference key="1">
    <citation type="submission" date="2008-04" db="EMBL/GenBank/DDBJ databases">
        <title>Complete sequence of chromosome 1 of Burkholderia ambifaria MC40-6.</title>
        <authorList>
            <person name="Copeland A."/>
            <person name="Lucas S."/>
            <person name="Lapidus A."/>
            <person name="Glavina del Rio T."/>
            <person name="Dalin E."/>
            <person name="Tice H."/>
            <person name="Pitluck S."/>
            <person name="Chain P."/>
            <person name="Malfatti S."/>
            <person name="Shin M."/>
            <person name="Vergez L."/>
            <person name="Lang D."/>
            <person name="Schmutz J."/>
            <person name="Larimer F."/>
            <person name="Land M."/>
            <person name="Hauser L."/>
            <person name="Kyrpides N."/>
            <person name="Lykidis A."/>
            <person name="Ramette A."/>
            <person name="Konstantinidis K."/>
            <person name="Tiedje J."/>
            <person name="Richardson P."/>
        </authorList>
    </citation>
    <scope>NUCLEOTIDE SEQUENCE [LARGE SCALE GENOMIC DNA]</scope>
    <source>
        <strain>MC40-6</strain>
    </source>
</reference>
<accession>B1YWB2</accession>
<organism>
    <name type="scientific">Burkholderia ambifaria (strain MC40-6)</name>
    <dbReference type="NCBI Taxonomy" id="398577"/>
    <lineage>
        <taxon>Bacteria</taxon>
        <taxon>Pseudomonadati</taxon>
        <taxon>Pseudomonadota</taxon>
        <taxon>Betaproteobacteria</taxon>
        <taxon>Burkholderiales</taxon>
        <taxon>Burkholderiaceae</taxon>
        <taxon>Burkholderia</taxon>
        <taxon>Burkholderia cepacia complex</taxon>
    </lineage>
</organism>